<feature type="chain" id="PRO_0000377980" description="Putative zinc finger protein 077L">
    <location>
        <begin position="1"/>
        <end position="313"/>
    </location>
</feature>
<feature type="zinc finger region" description="C3H1-type">
    <location>
        <begin position="174"/>
        <end position="199"/>
    </location>
</feature>
<feature type="region of interest" description="Disordered" evidence="1">
    <location>
        <begin position="294"/>
        <end position="313"/>
    </location>
</feature>
<feature type="compositionally biased region" description="Acidic residues" evidence="1">
    <location>
        <begin position="296"/>
        <end position="313"/>
    </location>
</feature>
<protein>
    <recommendedName>
        <fullName>Putative zinc finger protein 077L</fullName>
    </recommendedName>
</protein>
<dbReference type="EMBL" id="AF303741">
    <property type="protein sequence ID" value="AAB94423.1"/>
    <property type="molecule type" value="Genomic_DNA"/>
</dbReference>
<dbReference type="PIR" id="T03049">
    <property type="entry name" value="T03049"/>
</dbReference>
<dbReference type="RefSeq" id="NP_149540.1">
    <property type="nucleotide sequence ID" value="NC_003038.1"/>
</dbReference>
<dbReference type="KEGG" id="vg:1733267"/>
<dbReference type="OrthoDB" id="36306at10239"/>
<dbReference type="Proteomes" id="UP000001359">
    <property type="component" value="Genome"/>
</dbReference>
<dbReference type="GO" id="GO:0008270">
    <property type="term" value="F:zinc ion binding"/>
    <property type="evidence" value="ECO:0007669"/>
    <property type="project" value="UniProtKB-KW"/>
</dbReference>
<dbReference type="InterPro" id="IPR045410">
    <property type="entry name" value="Zn_finger_prot"/>
</dbReference>
<dbReference type="Pfam" id="PF19242">
    <property type="entry name" value="Zn_finger_prot"/>
    <property type="match status" value="1"/>
</dbReference>
<gene>
    <name type="ORF">IIV6-077L</name>
</gene>
<accession>O55712</accession>
<name>VF077_IIV6</name>
<keyword id="KW-0479">Metal-binding</keyword>
<keyword id="KW-1185">Reference proteome</keyword>
<keyword id="KW-0862">Zinc</keyword>
<keyword id="KW-0863">Zinc-finger</keyword>
<comment type="similarity">
    <text evidence="2">Belongs to the IIV-6 077L family.</text>
</comment>
<organism>
    <name type="scientific">Invertebrate iridescent virus 6</name>
    <name type="common">IIV-6</name>
    <name type="synonym">Chilo iridescent virus</name>
    <dbReference type="NCBI Taxonomy" id="176652"/>
    <lineage>
        <taxon>Viruses</taxon>
        <taxon>Varidnaviria</taxon>
        <taxon>Bamfordvirae</taxon>
        <taxon>Nucleocytoviricota</taxon>
        <taxon>Megaviricetes</taxon>
        <taxon>Pimascovirales</taxon>
        <taxon>Iridoviridae</taxon>
        <taxon>Betairidovirinae</taxon>
        <taxon>Iridovirus</taxon>
    </lineage>
</organism>
<organismHost>
    <name type="scientific">Acheta domesticus</name>
    <name type="common">House cricket</name>
    <dbReference type="NCBI Taxonomy" id="6997"/>
</organismHost>
<organismHost>
    <name type="scientific">Chilo suppressalis</name>
    <name type="common">Asiatic rice borer moth</name>
    <dbReference type="NCBI Taxonomy" id="168631"/>
</organismHost>
<organismHost>
    <name type="scientific">Gryllus bimaculatus</name>
    <name type="common">Two-spotted cricket</name>
    <dbReference type="NCBI Taxonomy" id="6999"/>
</organismHost>
<organismHost>
    <name type="scientific">Gryllus campestris</name>
    <dbReference type="NCBI Taxonomy" id="58607"/>
</organismHost>
<organismHost>
    <name type="scientific">Spodoptera frugiperda</name>
    <name type="common">Fall armyworm</name>
    <dbReference type="NCBI Taxonomy" id="7108"/>
</organismHost>
<proteinExistence type="inferred from homology"/>
<evidence type="ECO:0000256" key="1">
    <source>
        <dbReference type="SAM" id="MobiDB-lite"/>
    </source>
</evidence>
<evidence type="ECO:0000305" key="2"/>
<sequence>MNIMDYENSKRFRRNKLEEDNISDDEMENEEWDEGFGAEEFISFDEELPEYDENNPTPTCFSRWFDTQKYHYHRKIPLPIQLPKEDKKQPKQHPLKWAKFTDETEIESTMVVIGKIPLTRKRNVTNENVSFQGVANEIVVSKNIEGTKKKRNYAFTTYKNKNKKITKPIQNQLCFSITKGIECPHYSCTYIHNYSQIEHCQYNNQCRFALQVDDELYLQNNNGKCLKRHMYESIESYLLRLEIPIYNCTSLVLQVNPHVHSDCNILRRVLQNAKNCRVAPLIWQKKKVLELKTSDDSDSENNDEDDDWKIDLF</sequence>
<reference key="1">
    <citation type="journal article" date="2001" name="Virology">
        <title>Analysis of the first complete DNA sequence of an invertebrate iridovirus: coding strategy of the genome of Chilo iridescent virus.</title>
        <authorList>
            <person name="Jakob N.J."/>
            <person name="Mueller K."/>
            <person name="Bahr U."/>
            <person name="Darai G."/>
        </authorList>
    </citation>
    <scope>NUCLEOTIDE SEQUENCE [LARGE SCALE GENOMIC DNA]</scope>
</reference>
<reference key="2">
    <citation type="journal article" date="2007" name="Virol. J.">
        <title>Comparative genomic analysis of the family Iridoviridae: re-annotating and defining the core set of iridovirus genes.</title>
        <authorList>
            <person name="Eaton H.E."/>
            <person name="Metcalf J."/>
            <person name="Penny E."/>
            <person name="Tcherepanov V."/>
            <person name="Upton C."/>
            <person name="Brunetti C.R."/>
        </authorList>
    </citation>
    <scope>GENOME REANNOTATION</scope>
</reference>